<reference evidence="6" key="1">
    <citation type="journal article" date="2013" name="Proc. Natl. Acad. Sci. U.S.A.">
        <title>Distinct antimicrobial peptide expression determines host species-specific bacterial associations.</title>
        <authorList>
            <person name="Franzenburg S."/>
            <person name="Walter J."/>
            <person name="Kunzel S."/>
            <person name="Wang J."/>
            <person name="Baines J.F."/>
            <person name="Bosch T.C."/>
            <person name="Fraune S."/>
        </authorList>
    </citation>
    <scope>NUCLEOTIDE SEQUENCE [MRNA]</scope>
    <scope>TISSUE SPECIFICITY</scope>
    <source>
        <strain>AEP</strain>
    </source>
</reference>
<evidence type="ECO:0000250" key="1">
    <source>
        <dbReference type="UniProtKB" id="D2XUU4"/>
    </source>
</evidence>
<evidence type="ECO:0000255" key="2"/>
<evidence type="ECO:0000269" key="3">
    <source>
    </source>
</evidence>
<evidence type="ECO:0000303" key="4">
    <source>
    </source>
</evidence>
<evidence type="ECO:0000305" key="5"/>
<evidence type="ECO:0000312" key="6">
    <source>
        <dbReference type="EMBL" id="AGN53401.1"/>
    </source>
</evidence>
<protein>
    <recommendedName>
        <fullName evidence="4">Arminin 4364</fullName>
    </recommendedName>
</protein>
<dbReference type="EMBL" id="KC701494">
    <property type="protein sequence ID" value="AGN53401.1"/>
    <property type="molecule type" value="mRNA"/>
</dbReference>
<dbReference type="RefSeq" id="XP_065653420.1">
    <property type="nucleotide sequence ID" value="XM_065797348.1"/>
</dbReference>
<dbReference type="GeneID" id="136080546"/>
<dbReference type="Proteomes" id="UP000694840">
    <property type="component" value="Unplaced"/>
</dbReference>
<dbReference type="GO" id="GO:0005576">
    <property type="term" value="C:extracellular region"/>
    <property type="evidence" value="ECO:0007669"/>
    <property type="project" value="UniProtKB-SubCell"/>
</dbReference>
<name>ARM64_HYDVU</name>
<feature type="signal peptide" evidence="2">
    <location>
        <begin position="1"/>
        <end position="18"/>
    </location>
</feature>
<feature type="propeptide" id="PRO_0000461973" evidence="1">
    <location>
        <begin position="19"/>
        <end position="55"/>
    </location>
</feature>
<feature type="peptide" id="PRO_5004480360" description="Arminin 4364" evidence="1">
    <location>
        <begin position="56"/>
        <end position="80"/>
    </location>
</feature>
<feature type="modified residue" description="Valine amide" evidence="1">
    <location>
        <position position="80"/>
    </location>
</feature>
<comment type="function">
    <text evidence="1">Antimicrobial peptide with a broad-spectrum antimicrobial activity. Keeps its antibacterial activity under a wide range of salt concentrations that mimic physiological conditions of human blood, which is surprising, since Hydra is an obligate freshwater animal with nearly no salt tolerance. Does not affect red blood cells.</text>
</comment>
<comment type="subcellular location">
    <subcellularLocation>
        <location evidence="1">Secreted</location>
    </subcellularLocation>
    <subcellularLocation>
        <location evidence="1">Target cell membrane</location>
    </subcellularLocation>
</comment>
<comment type="tissue specificity">
    <text evidence="3">Expressed in entodermal epithelium along the body column.</text>
</comment>
<comment type="similarity">
    <text evidence="5">Belongs to the arminin family.</text>
</comment>
<proteinExistence type="evidence at transcript level"/>
<keyword id="KW-0027">Amidation</keyword>
<keyword id="KW-0044">Antibiotic</keyword>
<keyword id="KW-0929">Antimicrobial</keyword>
<keyword id="KW-0391">Immunity</keyword>
<keyword id="KW-0399">Innate immunity</keyword>
<keyword id="KW-0472">Membrane</keyword>
<keyword id="KW-1185">Reference proteome</keyword>
<keyword id="KW-0964">Secreted</keyword>
<keyword id="KW-0732">Signal</keyword>
<keyword id="KW-1052">Target cell membrane</keyword>
<keyword id="KW-1053">Target membrane</keyword>
<accession>R9UFE0</accession>
<organism>
    <name type="scientific">Hydra vulgaris</name>
    <name type="common">Hydra</name>
    <name type="synonym">Hydra attenuata</name>
    <dbReference type="NCBI Taxonomy" id="6087"/>
    <lineage>
        <taxon>Eukaryota</taxon>
        <taxon>Metazoa</taxon>
        <taxon>Cnidaria</taxon>
        <taxon>Hydrozoa</taxon>
        <taxon>Hydroidolina</taxon>
        <taxon>Anthoathecata</taxon>
        <taxon>Aplanulata</taxon>
        <taxon>Hydridae</taxon>
        <taxon>Hydra</taxon>
    </lineage>
</organism>
<sequence>MKTVFAILFLAFIALTYARSYEDVKEEIKNEVEKEILEDLEKETDELNERKINDAKPWRWVRDIRWRKLVPFIPVVVAAVGKK</sequence>